<protein>
    <recommendedName>
        <fullName evidence="1">Protein translocase subunit SecA</fullName>
        <ecNumber evidence="1">7.4.2.8</ecNumber>
    </recommendedName>
</protein>
<proteinExistence type="inferred from homology"/>
<feature type="chain" id="PRO_0000320994" description="Protein translocase subunit SecA">
    <location>
        <begin position="1"/>
        <end position="907"/>
    </location>
</feature>
<feature type="binding site" evidence="1">
    <location>
        <position position="87"/>
    </location>
    <ligand>
        <name>ATP</name>
        <dbReference type="ChEBI" id="CHEBI:30616"/>
    </ligand>
</feature>
<feature type="binding site" evidence="1">
    <location>
        <begin position="105"/>
        <end position="109"/>
    </location>
    <ligand>
        <name>ATP</name>
        <dbReference type="ChEBI" id="CHEBI:30616"/>
    </ligand>
</feature>
<feature type="binding site" evidence="1">
    <location>
        <position position="512"/>
    </location>
    <ligand>
        <name>ATP</name>
        <dbReference type="ChEBI" id="CHEBI:30616"/>
    </ligand>
</feature>
<feature type="binding site" evidence="1">
    <location>
        <position position="891"/>
    </location>
    <ligand>
        <name>Zn(2+)</name>
        <dbReference type="ChEBI" id="CHEBI:29105"/>
    </ligand>
</feature>
<feature type="binding site" evidence="1">
    <location>
        <position position="893"/>
    </location>
    <ligand>
        <name>Zn(2+)</name>
        <dbReference type="ChEBI" id="CHEBI:29105"/>
    </ligand>
</feature>
<feature type="binding site" evidence="1">
    <location>
        <position position="902"/>
    </location>
    <ligand>
        <name>Zn(2+)</name>
        <dbReference type="ChEBI" id="CHEBI:29105"/>
    </ligand>
</feature>
<feature type="binding site" evidence="1">
    <location>
        <position position="903"/>
    </location>
    <ligand>
        <name>Zn(2+)</name>
        <dbReference type="ChEBI" id="CHEBI:29105"/>
    </ligand>
</feature>
<dbReference type="EC" id="7.4.2.8" evidence="1"/>
<dbReference type="EMBL" id="CP000606">
    <property type="protein sequence ID" value="ABO25311.1"/>
    <property type="molecule type" value="Genomic_DNA"/>
</dbReference>
<dbReference type="RefSeq" id="WP_011867241.1">
    <property type="nucleotide sequence ID" value="NC_009092.1"/>
</dbReference>
<dbReference type="SMR" id="A3QIL3"/>
<dbReference type="STRING" id="323850.Shew_3445"/>
<dbReference type="KEGG" id="slo:Shew_3445"/>
<dbReference type="eggNOG" id="COG0653">
    <property type="taxonomic scope" value="Bacteria"/>
</dbReference>
<dbReference type="HOGENOM" id="CLU_005314_3_0_6"/>
<dbReference type="OrthoDB" id="9805579at2"/>
<dbReference type="Proteomes" id="UP000001558">
    <property type="component" value="Chromosome"/>
</dbReference>
<dbReference type="GO" id="GO:0031522">
    <property type="term" value="C:cell envelope Sec protein transport complex"/>
    <property type="evidence" value="ECO:0007669"/>
    <property type="project" value="TreeGrafter"/>
</dbReference>
<dbReference type="GO" id="GO:0005829">
    <property type="term" value="C:cytosol"/>
    <property type="evidence" value="ECO:0007669"/>
    <property type="project" value="TreeGrafter"/>
</dbReference>
<dbReference type="GO" id="GO:0005886">
    <property type="term" value="C:plasma membrane"/>
    <property type="evidence" value="ECO:0007669"/>
    <property type="project" value="UniProtKB-SubCell"/>
</dbReference>
<dbReference type="GO" id="GO:0005524">
    <property type="term" value="F:ATP binding"/>
    <property type="evidence" value="ECO:0007669"/>
    <property type="project" value="UniProtKB-UniRule"/>
</dbReference>
<dbReference type="GO" id="GO:0046872">
    <property type="term" value="F:metal ion binding"/>
    <property type="evidence" value="ECO:0007669"/>
    <property type="project" value="UniProtKB-KW"/>
</dbReference>
<dbReference type="GO" id="GO:0008564">
    <property type="term" value="F:protein-exporting ATPase activity"/>
    <property type="evidence" value="ECO:0007669"/>
    <property type="project" value="UniProtKB-EC"/>
</dbReference>
<dbReference type="GO" id="GO:0065002">
    <property type="term" value="P:intracellular protein transmembrane transport"/>
    <property type="evidence" value="ECO:0007669"/>
    <property type="project" value="UniProtKB-UniRule"/>
</dbReference>
<dbReference type="GO" id="GO:0017038">
    <property type="term" value="P:protein import"/>
    <property type="evidence" value="ECO:0007669"/>
    <property type="project" value="InterPro"/>
</dbReference>
<dbReference type="GO" id="GO:0006605">
    <property type="term" value="P:protein targeting"/>
    <property type="evidence" value="ECO:0007669"/>
    <property type="project" value="UniProtKB-UniRule"/>
</dbReference>
<dbReference type="GO" id="GO:0043952">
    <property type="term" value="P:protein transport by the Sec complex"/>
    <property type="evidence" value="ECO:0007669"/>
    <property type="project" value="TreeGrafter"/>
</dbReference>
<dbReference type="CDD" id="cd17928">
    <property type="entry name" value="DEXDc_SecA"/>
    <property type="match status" value="1"/>
</dbReference>
<dbReference type="CDD" id="cd18803">
    <property type="entry name" value="SF2_C_secA"/>
    <property type="match status" value="1"/>
</dbReference>
<dbReference type="FunFam" id="1.10.3060.10:FF:000001">
    <property type="entry name" value="Preprotein translocase subunit SecA"/>
    <property type="match status" value="1"/>
</dbReference>
<dbReference type="FunFam" id="3.40.50.300:FF:000081">
    <property type="entry name" value="Preprotein translocase subunit SecA"/>
    <property type="match status" value="1"/>
</dbReference>
<dbReference type="FunFam" id="3.40.50.300:FF:000113">
    <property type="entry name" value="Preprotein translocase subunit SecA"/>
    <property type="match status" value="1"/>
</dbReference>
<dbReference type="FunFam" id="3.90.1440.10:FF:000001">
    <property type="entry name" value="Preprotein translocase subunit SecA"/>
    <property type="match status" value="1"/>
</dbReference>
<dbReference type="Gene3D" id="1.10.3060.10">
    <property type="entry name" value="Helical scaffold and wing domains of SecA"/>
    <property type="match status" value="1"/>
</dbReference>
<dbReference type="Gene3D" id="3.40.50.300">
    <property type="entry name" value="P-loop containing nucleotide triphosphate hydrolases"/>
    <property type="match status" value="2"/>
</dbReference>
<dbReference type="Gene3D" id="3.90.1440.10">
    <property type="entry name" value="SecA, preprotein cross-linking domain"/>
    <property type="match status" value="1"/>
</dbReference>
<dbReference type="HAMAP" id="MF_01382">
    <property type="entry name" value="SecA"/>
    <property type="match status" value="1"/>
</dbReference>
<dbReference type="InterPro" id="IPR014001">
    <property type="entry name" value="Helicase_ATP-bd"/>
</dbReference>
<dbReference type="InterPro" id="IPR001650">
    <property type="entry name" value="Helicase_C-like"/>
</dbReference>
<dbReference type="InterPro" id="IPR027417">
    <property type="entry name" value="P-loop_NTPase"/>
</dbReference>
<dbReference type="InterPro" id="IPR004027">
    <property type="entry name" value="SEC_C_motif"/>
</dbReference>
<dbReference type="InterPro" id="IPR000185">
    <property type="entry name" value="SecA"/>
</dbReference>
<dbReference type="InterPro" id="IPR020937">
    <property type="entry name" value="SecA_CS"/>
</dbReference>
<dbReference type="InterPro" id="IPR011115">
    <property type="entry name" value="SecA_DEAD"/>
</dbReference>
<dbReference type="InterPro" id="IPR014018">
    <property type="entry name" value="SecA_motor_DEAD"/>
</dbReference>
<dbReference type="InterPro" id="IPR011130">
    <property type="entry name" value="SecA_preprotein_X-link_dom"/>
</dbReference>
<dbReference type="InterPro" id="IPR044722">
    <property type="entry name" value="SecA_SF2_C"/>
</dbReference>
<dbReference type="InterPro" id="IPR011116">
    <property type="entry name" value="SecA_Wing/Scaffold"/>
</dbReference>
<dbReference type="InterPro" id="IPR036266">
    <property type="entry name" value="SecA_Wing/Scaffold_sf"/>
</dbReference>
<dbReference type="InterPro" id="IPR036670">
    <property type="entry name" value="SecA_X-link_sf"/>
</dbReference>
<dbReference type="NCBIfam" id="NF009538">
    <property type="entry name" value="PRK12904.1"/>
    <property type="match status" value="1"/>
</dbReference>
<dbReference type="NCBIfam" id="TIGR00963">
    <property type="entry name" value="secA"/>
    <property type="match status" value="1"/>
</dbReference>
<dbReference type="PANTHER" id="PTHR30612:SF0">
    <property type="entry name" value="CHLOROPLAST PROTEIN-TRANSPORTING ATPASE"/>
    <property type="match status" value="1"/>
</dbReference>
<dbReference type="PANTHER" id="PTHR30612">
    <property type="entry name" value="SECA INNER MEMBRANE COMPONENT OF SEC PROTEIN SECRETION SYSTEM"/>
    <property type="match status" value="1"/>
</dbReference>
<dbReference type="Pfam" id="PF21090">
    <property type="entry name" value="P-loop_SecA"/>
    <property type="match status" value="1"/>
</dbReference>
<dbReference type="Pfam" id="PF02810">
    <property type="entry name" value="SEC-C"/>
    <property type="match status" value="1"/>
</dbReference>
<dbReference type="Pfam" id="PF07517">
    <property type="entry name" value="SecA_DEAD"/>
    <property type="match status" value="1"/>
</dbReference>
<dbReference type="Pfam" id="PF01043">
    <property type="entry name" value="SecA_PP_bind"/>
    <property type="match status" value="1"/>
</dbReference>
<dbReference type="Pfam" id="PF07516">
    <property type="entry name" value="SecA_SW"/>
    <property type="match status" value="1"/>
</dbReference>
<dbReference type="PRINTS" id="PR00906">
    <property type="entry name" value="SECA"/>
</dbReference>
<dbReference type="SMART" id="SM00957">
    <property type="entry name" value="SecA_DEAD"/>
    <property type="match status" value="1"/>
</dbReference>
<dbReference type="SMART" id="SM00958">
    <property type="entry name" value="SecA_PP_bind"/>
    <property type="match status" value="1"/>
</dbReference>
<dbReference type="SUPFAM" id="SSF81886">
    <property type="entry name" value="Helical scaffold and wing domains of SecA"/>
    <property type="match status" value="1"/>
</dbReference>
<dbReference type="SUPFAM" id="SSF52540">
    <property type="entry name" value="P-loop containing nucleoside triphosphate hydrolases"/>
    <property type="match status" value="2"/>
</dbReference>
<dbReference type="SUPFAM" id="SSF81767">
    <property type="entry name" value="Pre-protein crosslinking domain of SecA"/>
    <property type="match status" value="1"/>
</dbReference>
<dbReference type="PROSITE" id="PS01312">
    <property type="entry name" value="SECA"/>
    <property type="match status" value="1"/>
</dbReference>
<dbReference type="PROSITE" id="PS51196">
    <property type="entry name" value="SECA_MOTOR_DEAD"/>
    <property type="match status" value="1"/>
</dbReference>
<name>SECA_SHELP</name>
<accession>A3QIL3</accession>
<reference key="1">
    <citation type="submission" date="2007-03" db="EMBL/GenBank/DDBJ databases">
        <title>Complete sequence of Shewanella loihica PV-4.</title>
        <authorList>
            <consortium name="US DOE Joint Genome Institute"/>
            <person name="Copeland A."/>
            <person name="Lucas S."/>
            <person name="Lapidus A."/>
            <person name="Barry K."/>
            <person name="Detter J.C."/>
            <person name="Glavina del Rio T."/>
            <person name="Hammon N."/>
            <person name="Israni S."/>
            <person name="Dalin E."/>
            <person name="Tice H."/>
            <person name="Pitluck S."/>
            <person name="Chain P."/>
            <person name="Malfatti S."/>
            <person name="Shin M."/>
            <person name="Vergez L."/>
            <person name="Schmutz J."/>
            <person name="Larimer F."/>
            <person name="Land M."/>
            <person name="Hauser L."/>
            <person name="Kyrpides N."/>
            <person name="Mikhailova N."/>
            <person name="Romine M.F."/>
            <person name="Serres G."/>
            <person name="Fredrickson J."/>
            <person name="Tiedje J."/>
            <person name="Richardson P."/>
        </authorList>
    </citation>
    <scope>NUCLEOTIDE SEQUENCE [LARGE SCALE GENOMIC DNA]</scope>
    <source>
        <strain>ATCC BAA-1088 / PV-4</strain>
    </source>
</reference>
<comment type="function">
    <text evidence="1">Part of the Sec protein translocase complex. Interacts with the SecYEG preprotein conducting channel. Has a central role in coupling the hydrolysis of ATP to the transfer of proteins into and across the cell membrane, serving both as a receptor for the preprotein-SecB complex and as an ATP-driven molecular motor driving the stepwise translocation of polypeptide chains across the membrane.</text>
</comment>
<comment type="catalytic activity">
    <reaction evidence="1">
        <text>ATP + H2O + cellular proteinSide 1 = ADP + phosphate + cellular proteinSide 2.</text>
        <dbReference type="EC" id="7.4.2.8"/>
    </reaction>
</comment>
<comment type="cofactor">
    <cofactor evidence="1">
        <name>Zn(2+)</name>
        <dbReference type="ChEBI" id="CHEBI:29105"/>
    </cofactor>
    <text evidence="1">May bind 1 zinc ion per subunit.</text>
</comment>
<comment type="subunit">
    <text evidence="1">Monomer and homodimer. Part of the essential Sec protein translocation apparatus which comprises SecA, SecYEG and auxiliary proteins SecDF-YajC and YidC.</text>
</comment>
<comment type="subcellular location">
    <subcellularLocation>
        <location evidence="1">Cell inner membrane</location>
        <topology evidence="1">Peripheral membrane protein</topology>
        <orientation evidence="1">Cytoplasmic side</orientation>
    </subcellularLocation>
    <subcellularLocation>
        <location evidence="1">Cytoplasm</location>
    </subcellularLocation>
    <text evidence="1">Distribution is 50-50.</text>
</comment>
<comment type="similarity">
    <text evidence="1">Belongs to the SecA family.</text>
</comment>
<sequence>MFGKLLTKIFGSRNDRTLKTLGKIVTKINALEADFEKFSDEELKAKTAEFKQRLESGQTLDDVMPEAFAVVREASKRVFEMRHFDVQLLGGMVLDSNRIAEMRTGEGKTLTATLPAYLNALTGKGVHVITVNDYLARRDAENNRPLFEFLGMTVGVNIAGMGQAEKKMAYASDITYGTNNEFGFDYLRDNMAFSPNERVQRPLHYALIDEVDSILIDEARTPLIISGAAEDSSELYIKINTLIPHLIRQDKEDTEEEIGDGDYSIDEKAKQVHMTERGQEKVEVLLTERGMLAEGDSLYSAANISLLHHVNAALRAHTLFEKDVDYIVQDNEVIIVDEHTGRTMPGRRWSEGLHQAVEAKEGVHIQNENQTLASITFQNFFRQYEKLAGMTGTADTEAFEFQHIYGLDTVVIPTNRPMVRKDHADLVYLTAEEKYDAIIKDIIDCRDRGQPVLVGTVSIEQSELLHSMLKKAKIPHEVLNAKFHEREAEIVAQAGRSGAVTIATNMAGRGTDIVLGGNWNMEIDALENPTAEQKAKIKADWQVRHDEVVAAGGLHILGTERHESRRIDNQLRGRSGRQGDAGSSRFYLSMEDSLMRIFASERVSSMMKKLGMEKGEAIEHPWVSRAIENAQRKVEARNFDIRKQLLEFDDVANDQRQVVYAQRNELMDAESIQDTIVNIQADVVNGLIDQYIPPQSVEELWDIAGLETRLEQEYALRMPVQEWLDKEDDLHEETLRERIVEIWVKAYKAKEEMVGAQVLRQFEKAVMLQTLDGLWKEHLAAMDHLRQGIHLRGYAQKNPKQEYKRESFELFQQMLESLKHDVISILSKVQVQAQSDVEEMEERRRQEEAKVRRDYQHAEAEALVGAEEAQALAATQPVVREGEKVGRNDPCPCGSGRKYKQCHGKLS</sequence>
<organism>
    <name type="scientific">Shewanella loihica (strain ATCC BAA-1088 / PV-4)</name>
    <dbReference type="NCBI Taxonomy" id="323850"/>
    <lineage>
        <taxon>Bacteria</taxon>
        <taxon>Pseudomonadati</taxon>
        <taxon>Pseudomonadota</taxon>
        <taxon>Gammaproteobacteria</taxon>
        <taxon>Alteromonadales</taxon>
        <taxon>Shewanellaceae</taxon>
        <taxon>Shewanella</taxon>
    </lineage>
</organism>
<keyword id="KW-0067">ATP-binding</keyword>
<keyword id="KW-0997">Cell inner membrane</keyword>
<keyword id="KW-1003">Cell membrane</keyword>
<keyword id="KW-0963">Cytoplasm</keyword>
<keyword id="KW-0472">Membrane</keyword>
<keyword id="KW-0479">Metal-binding</keyword>
<keyword id="KW-0547">Nucleotide-binding</keyword>
<keyword id="KW-0653">Protein transport</keyword>
<keyword id="KW-1185">Reference proteome</keyword>
<keyword id="KW-1278">Translocase</keyword>
<keyword id="KW-0811">Translocation</keyword>
<keyword id="KW-0813">Transport</keyword>
<keyword id="KW-0862">Zinc</keyword>
<gene>
    <name evidence="1" type="primary">secA</name>
    <name type="ordered locus">Shew_3445</name>
</gene>
<evidence type="ECO:0000255" key="1">
    <source>
        <dbReference type="HAMAP-Rule" id="MF_01382"/>
    </source>
</evidence>